<accession>Q95917</accession>
<dbReference type="EC" id="7.1.1.2"/>
<dbReference type="EMBL" id="U62532">
    <property type="protein sequence ID" value="AAC60314.1"/>
    <property type="molecule type" value="Genomic_DNA"/>
</dbReference>
<dbReference type="PIR" id="T11463">
    <property type="entry name" value="T11463"/>
</dbReference>
<dbReference type="RefSeq" id="NP_008325.1">
    <property type="nucleotide sequence ID" value="NC_001778.1"/>
</dbReference>
<dbReference type="SMR" id="Q95917"/>
<dbReference type="GeneID" id="808026"/>
<dbReference type="CTD" id="4538"/>
<dbReference type="GO" id="GO:0031966">
    <property type="term" value="C:mitochondrial membrane"/>
    <property type="evidence" value="ECO:0007669"/>
    <property type="project" value="UniProtKB-SubCell"/>
</dbReference>
<dbReference type="GO" id="GO:0008137">
    <property type="term" value="F:NADH dehydrogenase (ubiquinone) activity"/>
    <property type="evidence" value="ECO:0007669"/>
    <property type="project" value="UniProtKB-EC"/>
</dbReference>
<dbReference type="GO" id="GO:0048039">
    <property type="term" value="F:ubiquinone binding"/>
    <property type="evidence" value="ECO:0007669"/>
    <property type="project" value="TreeGrafter"/>
</dbReference>
<dbReference type="GO" id="GO:0042773">
    <property type="term" value="P:ATP synthesis coupled electron transport"/>
    <property type="evidence" value="ECO:0007669"/>
    <property type="project" value="InterPro"/>
</dbReference>
<dbReference type="GO" id="GO:0015990">
    <property type="term" value="P:electron transport coupled proton transport"/>
    <property type="evidence" value="ECO:0007669"/>
    <property type="project" value="TreeGrafter"/>
</dbReference>
<dbReference type="InterPro" id="IPR000260">
    <property type="entry name" value="NADH4_N"/>
</dbReference>
<dbReference type="InterPro" id="IPR010227">
    <property type="entry name" value="NADH_Q_OxRdtase_chainM/4"/>
</dbReference>
<dbReference type="InterPro" id="IPR003918">
    <property type="entry name" value="NADH_UbQ_OxRdtase"/>
</dbReference>
<dbReference type="InterPro" id="IPR001750">
    <property type="entry name" value="ND/Mrp_TM"/>
</dbReference>
<dbReference type="NCBIfam" id="TIGR01972">
    <property type="entry name" value="NDH_I_M"/>
    <property type="match status" value="1"/>
</dbReference>
<dbReference type="PANTHER" id="PTHR43507">
    <property type="entry name" value="NADH-UBIQUINONE OXIDOREDUCTASE CHAIN 4"/>
    <property type="match status" value="1"/>
</dbReference>
<dbReference type="PANTHER" id="PTHR43507:SF20">
    <property type="entry name" value="NADH-UBIQUINONE OXIDOREDUCTASE CHAIN 4"/>
    <property type="match status" value="1"/>
</dbReference>
<dbReference type="Pfam" id="PF01059">
    <property type="entry name" value="Oxidored_q5_N"/>
    <property type="match status" value="1"/>
</dbReference>
<dbReference type="Pfam" id="PF00361">
    <property type="entry name" value="Proton_antipo_M"/>
    <property type="match status" value="1"/>
</dbReference>
<dbReference type="PRINTS" id="PR01437">
    <property type="entry name" value="NUOXDRDTASE4"/>
</dbReference>
<sequence>MLKLLIPTIMLFPMIWTLNPKWLWSATTTHSLIIASLSLTLFKCYSTTQWSNLNYMLATDMISTPLIILTCWLLPLMIIASQNHMSTEPINRQRSYITLLVSLQALLIMAFSATEIILFYIMFESTLIPTLIIITRWGNQTERLNAGIYFLFYTLAGSLPLLVALLYLYNTAGSLSFISMNLISIPPNTWTNTFLWVACVTAFLVKMPLYGVHLWLPKAHVEAPVAGSMILAAILLKLGGYGMIRMTIMLEPATKSLAYPFIILALWGIIMTGSICMRQSDMKSLIAYSSVSHMGLVASGILIQTTWGFTGAIILMIAHGLTSSALFCLANTAYERTHSRTLLLARGMQIILPLMATWWFIMSLANMALPPLPNLMGELMILVSMFNWSNWTILLTGTGTLITASYSLYLYMSSQRGPTPNNLTFMELSHTREHLLLTLHIIPIILLMIKPELIWGWCW</sequence>
<feature type="chain" id="PRO_0000117973" description="NADH-ubiquinone oxidoreductase chain 4">
    <location>
        <begin position="1"/>
        <end position="459"/>
    </location>
</feature>
<feature type="transmembrane region" description="Helical" evidence="2">
    <location>
        <begin position="20"/>
        <end position="42"/>
    </location>
</feature>
<feature type="transmembrane region" description="Helical" evidence="2">
    <location>
        <begin position="61"/>
        <end position="81"/>
    </location>
</feature>
<feature type="transmembrane region" description="Helical" evidence="2">
    <location>
        <begin position="103"/>
        <end position="123"/>
    </location>
</feature>
<feature type="transmembrane region" description="Helical" evidence="2">
    <location>
        <begin position="148"/>
        <end position="168"/>
    </location>
</feature>
<feature type="transmembrane region" description="Helical" evidence="2">
    <location>
        <begin position="194"/>
        <end position="214"/>
    </location>
</feature>
<feature type="transmembrane region" description="Helical" evidence="2">
    <location>
        <begin position="224"/>
        <end position="244"/>
    </location>
</feature>
<feature type="transmembrane region" description="Helical" evidence="2">
    <location>
        <begin position="257"/>
        <end position="277"/>
    </location>
</feature>
<feature type="transmembrane region" description="Helical" evidence="2">
    <location>
        <begin position="284"/>
        <end position="303"/>
    </location>
</feature>
<feature type="transmembrane region" description="Helical" evidence="2">
    <location>
        <begin position="307"/>
        <end position="329"/>
    </location>
</feature>
<feature type="transmembrane region" description="Helical" evidence="2">
    <location>
        <begin position="350"/>
        <end position="370"/>
    </location>
</feature>
<feature type="transmembrane region" description="Helical" evidence="2">
    <location>
        <begin position="392"/>
        <end position="414"/>
    </location>
</feature>
<feature type="transmembrane region" description="Helical" evidence="2">
    <location>
        <begin position="435"/>
        <end position="455"/>
    </location>
</feature>
<keyword id="KW-0249">Electron transport</keyword>
<keyword id="KW-0472">Membrane</keyword>
<keyword id="KW-0496">Mitochondrion</keyword>
<keyword id="KW-0520">NAD</keyword>
<keyword id="KW-0679">Respiratory chain</keyword>
<keyword id="KW-1278">Translocase</keyword>
<keyword id="KW-0812">Transmembrane</keyword>
<keyword id="KW-1133">Transmembrane helix</keyword>
<keyword id="KW-0813">Transport</keyword>
<keyword id="KW-0830">Ubiquinone</keyword>
<gene>
    <name type="primary">MT-ND4</name>
    <name type="synonym">MTND4</name>
    <name type="synonym">NADH4</name>
    <name type="synonym">ND4</name>
</gene>
<evidence type="ECO:0000250" key="1"/>
<evidence type="ECO:0000255" key="2"/>
<evidence type="ECO:0000305" key="3"/>
<geneLocation type="mitochondrion"/>
<name>NU4M_POLOR</name>
<protein>
    <recommendedName>
        <fullName>NADH-ubiquinone oxidoreductase chain 4</fullName>
        <ecNumber>7.1.1.2</ecNumber>
    </recommendedName>
    <alternativeName>
        <fullName>NADH dehydrogenase subunit 4</fullName>
    </alternativeName>
</protein>
<organism>
    <name type="scientific">Polypterus ornatipinnis</name>
    <name type="common">Ornate bichir</name>
    <dbReference type="NCBI Taxonomy" id="49895"/>
    <lineage>
        <taxon>Eukaryota</taxon>
        <taxon>Metazoa</taxon>
        <taxon>Chordata</taxon>
        <taxon>Craniata</taxon>
        <taxon>Vertebrata</taxon>
        <taxon>Euteleostomi</taxon>
        <taxon>Actinopterygii</taxon>
        <taxon>Polypteriformes</taxon>
        <taxon>Polypteridae</taxon>
        <taxon>Polypterus</taxon>
    </lineage>
</organism>
<reference key="1">
    <citation type="journal article" date="1996" name="Genetics">
        <title>The complete mitochondrial DNA sequence of the bichir (Polypterus ornatipinnis), a basal ray-finned fish: ancient establishment of the consensus vertebrate gene order.</title>
        <authorList>
            <person name="Noack K."/>
            <person name="Zardoya R."/>
            <person name="Meyer A."/>
        </authorList>
    </citation>
    <scope>NUCLEOTIDE SEQUENCE [GENOMIC DNA]</scope>
</reference>
<comment type="function">
    <text evidence="1">Core subunit of the mitochondrial membrane respiratory chain NADH dehydrogenase (Complex I) that is believed to belong to the minimal assembly required for catalysis. Complex I functions in the transfer of electrons from NADH to the respiratory chain. The immediate electron acceptor for the enzyme is believed to be ubiquinone (By similarity).</text>
</comment>
<comment type="catalytic activity">
    <reaction>
        <text>a ubiquinone + NADH + 5 H(+)(in) = a ubiquinol + NAD(+) + 4 H(+)(out)</text>
        <dbReference type="Rhea" id="RHEA:29091"/>
        <dbReference type="Rhea" id="RHEA-COMP:9565"/>
        <dbReference type="Rhea" id="RHEA-COMP:9566"/>
        <dbReference type="ChEBI" id="CHEBI:15378"/>
        <dbReference type="ChEBI" id="CHEBI:16389"/>
        <dbReference type="ChEBI" id="CHEBI:17976"/>
        <dbReference type="ChEBI" id="CHEBI:57540"/>
        <dbReference type="ChEBI" id="CHEBI:57945"/>
        <dbReference type="EC" id="7.1.1.2"/>
    </reaction>
</comment>
<comment type="subcellular location">
    <subcellularLocation>
        <location evidence="1">Mitochondrion membrane</location>
        <topology evidence="1">Multi-pass membrane protein</topology>
    </subcellularLocation>
</comment>
<comment type="similarity">
    <text evidence="3">Belongs to the complex I subunit 4 family.</text>
</comment>
<proteinExistence type="inferred from homology"/>